<comment type="function">
    <text evidence="1">NDH shuttles electrons from NAD(P)H:plastoquinone, via FMN and iron-sulfur (Fe-S) centers, to quinones in the photosynthetic chain and possibly in a chloroplast respiratory chain. The immediate electron acceptor for the enzyme in this species is believed to be plastoquinone. Couples the redox reaction to proton translocation, and thus conserves the redox energy in a proton gradient.</text>
</comment>
<comment type="catalytic activity">
    <reaction evidence="1">
        <text>a plastoquinone + NADH + (n+1) H(+)(in) = a plastoquinol + NAD(+) + n H(+)(out)</text>
        <dbReference type="Rhea" id="RHEA:42608"/>
        <dbReference type="Rhea" id="RHEA-COMP:9561"/>
        <dbReference type="Rhea" id="RHEA-COMP:9562"/>
        <dbReference type="ChEBI" id="CHEBI:15378"/>
        <dbReference type="ChEBI" id="CHEBI:17757"/>
        <dbReference type="ChEBI" id="CHEBI:57540"/>
        <dbReference type="ChEBI" id="CHEBI:57945"/>
        <dbReference type="ChEBI" id="CHEBI:62192"/>
    </reaction>
</comment>
<comment type="catalytic activity">
    <reaction evidence="1">
        <text>a plastoquinone + NADPH + (n+1) H(+)(in) = a plastoquinol + NADP(+) + n H(+)(out)</text>
        <dbReference type="Rhea" id="RHEA:42612"/>
        <dbReference type="Rhea" id="RHEA-COMP:9561"/>
        <dbReference type="Rhea" id="RHEA-COMP:9562"/>
        <dbReference type="ChEBI" id="CHEBI:15378"/>
        <dbReference type="ChEBI" id="CHEBI:17757"/>
        <dbReference type="ChEBI" id="CHEBI:57783"/>
        <dbReference type="ChEBI" id="CHEBI:58349"/>
        <dbReference type="ChEBI" id="CHEBI:62192"/>
    </reaction>
</comment>
<comment type="cofactor">
    <cofactor evidence="1">
        <name>[4Fe-4S] cluster</name>
        <dbReference type="ChEBI" id="CHEBI:49883"/>
    </cofactor>
    <text evidence="1">Binds 1 [4Fe-4S] cluster.</text>
</comment>
<comment type="subunit">
    <text evidence="1">NDH is composed of at least 16 different subunits, 5 of which are encoded in the nucleus.</text>
</comment>
<comment type="subcellular location">
    <subcellularLocation>
        <location evidence="1">Plastid</location>
        <location evidence="1">Chloroplast thylakoid membrane</location>
        <topology evidence="1">Peripheral membrane protein</topology>
        <orientation evidence="1">Stromal side</orientation>
    </subcellularLocation>
</comment>
<comment type="similarity">
    <text evidence="1">Belongs to the complex I 20 kDa subunit family.</text>
</comment>
<keyword id="KW-0004">4Fe-4S</keyword>
<keyword id="KW-0150">Chloroplast</keyword>
<keyword id="KW-0408">Iron</keyword>
<keyword id="KW-0411">Iron-sulfur</keyword>
<keyword id="KW-0472">Membrane</keyword>
<keyword id="KW-0479">Metal-binding</keyword>
<keyword id="KW-0520">NAD</keyword>
<keyword id="KW-0521">NADP</keyword>
<keyword id="KW-0934">Plastid</keyword>
<keyword id="KW-0618">Plastoquinone</keyword>
<keyword id="KW-0874">Quinone</keyword>
<keyword id="KW-0793">Thylakoid</keyword>
<keyword id="KW-1278">Translocase</keyword>
<keyword id="KW-0813">Transport</keyword>
<organism>
    <name type="scientific">Staurastrum punctulatum</name>
    <name type="common">Green alga</name>
    <name type="synonym">Cosmoastrum punctulatum</name>
    <dbReference type="NCBI Taxonomy" id="102822"/>
    <lineage>
        <taxon>Eukaryota</taxon>
        <taxon>Viridiplantae</taxon>
        <taxon>Streptophyta</taxon>
        <taxon>Zygnematophyceae</taxon>
        <taxon>Zygnematophycidae</taxon>
        <taxon>Desmidiales</taxon>
        <taxon>Desmidiaceae</taxon>
        <taxon>Staurastrum</taxon>
    </lineage>
</organism>
<dbReference type="EC" id="7.1.1.-" evidence="1"/>
<dbReference type="EMBL" id="AY958085">
    <property type="protein sequence ID" value="AAX45707.1"/>
    <property type="molecule type" value="Genomic_DNA"/>
</dbReference>
<dbReference type="RefSeq" id="YP_636385.1">
    <property type="nucleotide sequence ID" value="NC_008116.1"/>
</dbReference>
<dbReference type="SMR" id="Q32RZ1"/>
<dbReference type="GeneID" id="4108656"/>
<dbReference type="GO" id="GO:0009535">
    <property type="term" value="C:chloroplast thylakoid membrane"/>
    <property type="evidence" value="ECO:0007669"/>
    <property type="project" value="UniProtKB-SubCell"/>
</dbReference>
<dbReference type="GO" id="GO:0045271">
    <property type="term" value="C:respiratory chain complex I"/>
    <property type="evidence" value="ECO:0007669"/>
    <property type="project" value="TreeGrafter"/>
</dbReference>
<dbReference type="GO" id="GO:0051539">
    <property type="term" value="F:4 iron, 4 sulfur cluster binding"/>
    <property type="evidence" value="ECO:0007669"/>
    <property type="project" value="UniProtKB-KW"/>
</dbReference>
<dbReference type="GO" id="GO:0005506">
    <property type="term" value="F:iron ion binding"/>
    <property type="evidence" value="ECO:0007669"/>
    <property type="project" value="UniProtKB-UniRule"/>
</dbReference>
<dbReference type="GO" id="GO:0008137">
    <property type="term" value="F:NADH dehydrogenase (ubiquinone) activity"/>
    <property type="evidence" value="ECO:0007669"/>
    <property type="project" value="InterPro"/>
</dbReference>
<dbReference type="GO" id="GO:0048038">
    <property type="term" value="F:quinone binding"/>
    <property type="evidence" value="ECO:0007669"/>
    <property type="project" value="UniProtKB-KW"/>
</dbReference>
<dbReference type="GO" id="GO:0009060">
    <property type="term" value="P:aerobic respiration"/>
    <property type="evidence" value="ECO:0007669"/>
    <property type="project" value="TreeGrafter"/>
</dbReference>
<dbReference type="GO" id="GO:0015990">
    <property type="term" value="P:electron transport coupled proton transport"/>
    <property type="evidence" value="ECO:0007669"/>
    <property type="project" value="TreeGrafter"/>
</dbReference>
<dbReference type="GO" id="GO:0019684">
    <property type="term" value="P:photosynthesis, light reaction"/>
    <property type="evidence" value="ECO:0007669"/>
    <property type="project" value="UniProtKB-UniRule"/>
</dbReference>
<dbReference type="FunFam" id="3.40.50.12280:FF:000003">
    <property type="entry name" value="NAD(P)H-quinone oxidoreductase subunit K, chloroplastic"/>
    <property type="match status" value="1"/>
</dbReference>
<dbReference type="Gene3D" id="3.40.50.12280">
    <property type="match status" value="1"/>
</dbReference>
<dbReference type="HAMAP" id="MF_01356">
    <property type="entry name" value="NDH1_NuoB"/>
    <property type="match status" value="1"/>
</dbReference>
<dbReference type="InterPro" id="IPR006137">
    <property type="entry name" value="NADH_UbQ_OxRdtase-like_20kDa"/>
</dbReference>
<dbReference type="InterPro" id="IPR006138">
    <property type="entry name" value="NADH_UQ_OxRdtase_20Kd_su"/>
</dbReference>
<dbReference type="NCBIfam" id="TIGR01957">
    <property type="entry name" value="nuoB_fam"/>
    <property type="match status" value="1"/>
</dbReference>
<dbReference type="NCBIfam" id="NF005012">
    <property type="entry name" value="PRK06411.1"/>
    <property type="match status" value="1"/>
</dbReference>
<dbReference type="PANTHER" id="PTHR11995">
    <property type="entry name" value="NADH DEHYDROGENASE"/>
    <property type="match status" value="1"/>
</dbReference>
<dbReference type="PANTHER" id="PTHR11995:SF14">
    <property type="entry name" value="NADH DEHYDROGENASE [UBIQUINONE] IRON-SULFUR PROTEIN 7, MITOCHONDRIAL"/>
    <property type="match status" value="1"/>
</dbReference>
<dbReference type="Pfam" id="PF01058">
    <property type="entry name" value="Oxidored_q6"/>
    <property type="match status" value="1"/>
</dbReference>
<dbReference type="SUPFAM" id="SSF56770">
    <property type="entry name" value="HydA/Nqo6-like"/>
    <property type="match status" value="1"/>
</dbReference>
<dbReference type="PROSITE" id="PS01150">
    <property type="entry name" value="COMPLEX1_20K"/>
    <property type="match status" value="1"/>
</dbReference>
<reference key="1">
    <citation type="journal article" date="2005" name="BMC Biol.">
        <title>The complete chloroplast DNA sequences of the charophycean green algae Staurastrum and Zygnema reveal that the chloroplast genome underwent extensive changes during the evolution of the Zygnematales.</title>
        <authorList>
            <person name="Turmel M."/>
            <person name="Otis C."/>
            <person name="Lemieux C."/>
        </authorList>
    </citation>
    <scope>NUCLEOTIDE SEQUENCE [LARGE SCALE GENOMIC DNA]</scope>
</reference>
<name>NDHK_STAPU</name>
<accession>Q32RZ1</accession>
<proteinExistence type="inferred from homology"/>
<geneLocation type="chloroplast"/>
<sequence>MVINSELFRSSNSFQEEGFESVTNGLSFSITEENISDSVILTTFHDFTNWIRLSSLWPLLYGTSCCFIEFASLIGSRFDFDRYGLVPRSSPRQADLIITAGTVTMKMAPSLVRLYEQMPEPKYVIAMGACTITGGMFSTDSYSTVRGVDKLIPVDVYLPGCPPKPEAIIDAVIKLRKKVGQETAHEKKNYQQSQRCFTMSHRLKPVLPIHTGTYDQQTLRRTPGIEMDTSLEYPLERILQNSIETSSPFQDSEEIGLLKDWKQSNQKQEQNVKMMKEEEA</sequence>
<evidence type="ECO:0000255" key="1">
    <source>
        <dbReference type="HAMAP-Rule" id="MF_01356"/>
    </source>
</evidence>
<evidence type="ECO:0000256" key="2">
    <source>
        <dbReference type="SAM" id="MobiDB-lite"/>
    </source>
</evidence>
<protein>
    <recommendedName>
        <fullName evidence="1">NAD(P)H-quinone oxidoreductase subunit K, chloroplastic</fullName>
        <ecNumber evidence="1">7.1.1.-</ecNumber>
    </recommendedName>
    <alternativeName>
        <fullName evidence="1">NAD(P)H dehydrogenase subunit K</fullName>
    </alternativeName>
    <alternativeName>
        <fullName evidence="1">NADH-plastoquinone oxidoreductase subunit K</fullName>
    </alternativeName>
</protein>
<gene>
    <name evidence="1" type="primary">ndhK</name>
</gene>
<feature type="chain" id="PRO_0000358584" description="NAD(P)H-quinone oxidoreductase subunit K, chloroplastic">
    <location>
        <begin position="1"/>
        <end position="280"/>
    </location>
</feature>
<feature type="region of interest" description="Disordered" evidence="2">
    <location>
        <begin position="257"/>
        <end position="280"/>
    </location>
</feature>
<feature type="binding site" evidence="1">
    <location>
        <position position="65"/>
    </location>
    <ligand>
        <name>[4Fe-4S] cluster</name>
        <dbReference type="ChEBI" id="CHEBI:49883"/>
    </ligand>
</feature>
<feature type="binding site" evidence="1">
    <location>
        <position position="66"/>
    </location>
    <ligand>
        <name>[4Fe-4S] cluster</name>
        <dbReference type="ChEBI" id="CHEBI:49883"/>
    </ligand>
</feature>
<feature type="binding site" evidence="1">
    <location>
        <position position="130"/>
    </location>
    <ligand>
        <name>[4Fe-4S] cluster</name>
        <dbReference type="ChEBI" id="CHEBI:49883"/>
    </ligand>
</feature>
<feature type="binding site" evidence="1">
    <location>
        <position position="161"/>
    </location>
    <ligand>
        <name>[4Fe-4S] cluster</name>
        <dbReference type="ChEBI" id="CHEBI:49883"/>
    </ligand>
</feature>